<keyword id="KW-0678">Repressor</keyword>
<keyword id="KW-0687">Ribonucleoprotein</keyword>
<keyword id="KW-0689">Ribosomal protein</keyword>
<keyword id="KW-0694">RNA-binding</keyword>
<keyword id="KW-0699">rRNA-binding</keyword>
<keyword id="KW-0810">Translation regulation</keyword>
<keyword id="KW-0820">tRNA-binding</keyword>
<sequence length="232" mass="24728">MTKHGKRIRGIQETYDLAKSYSLGEAIDILKQCPTVRFDQTVDVSVKLGIDPRKSDQQVRGSVSLPHGTGKVLRILVFAAGDKAAEAIEAGADFVGSDDLVEKIKGGWVDFDVAVATPDMMREVGKLGKVLGPRNLMPTPKAGTVTTDVVKTIAELRKGKIEFKADRAGVCNVGVAKLSFDSAQIKENVEALCAALVKAKPATAKGQYLVNFTISSTMGPGVTVDTRELIAL</sequence>
<protein>
    <recommendedName>
        <fullName evidence="1">Large ribosomal subunit protein uL1</fullName>
    </recommendedName>
    <alternativeName>
        <fullName evidence="2">50S ribosomal protein L1</fullName>
    </alternativeName>
</protein>
<name>RL1_CHLTB</name>
<gene>
    <name evidence="1" type="primary">rplA</name>
    <name type="ordered locus">CTLon_0566</name>
</gene>
<accession>B0BBU9</accession>
<dbReference type="EMBL" id="AM884177">
    <property type="protein sequence ID" value="CAP06964.1"/>
    <property type="molecule type" value="Genomic_DNA"/>
</dbReference>
<dbReference type="RefSeq" id="WP_012263640.1">
    <property type="nucleotide sequence ID" value="NC_010280.2"/>
</dbReference>
<dbReference type="SMR" id="B0BBU9"/>
<dbReference type="KEGG" id="ctl:CTLon_0566"/>
<dbReference type="HOGENOM" id="CLU_062853_0_0_0"/>
<dbReference type="Proteomes" id="UP001154401">
    <property type="component" value="Chromosome"/>
</dbReference>
<dbReference type="GO" id="GO:0015934">
    <property type="term" value="C:large ribosomal subunit"/>
    <property type="evidence" value="ECO:0007669"/>
    <property type="project" value="InterPro"/>
</dbReference>
<dbReference type="GO" id="GO:0019843">
    <property type="term" value="F:rRNA binding"/>
    <property type="evidence" value="ECO:0007669"/>
    <property type="project" value="UniProtKB-UniRule"/>
</dbReference>
<dbReference type="GO" id="GO:0003735">
    <property type="term" value="F:structural constituent of ribosome"/>
    <property type="evidence" value="ECO:0007669"/>
    <property type="project" value="InterPro"/>
</dbReference>
<dbReference type="GO" id="GO:0000049">
    <property type="term" value="F:tRNA binding"/>
    <property type="evidence" value="ECO:0007669"/>
    <property type="project" value="UniProtKB-KW"/>
</dbReference>
<dbReference type="GO" id="GO:0006417">
    <property type="term" value="P:regulation of translation"/>
    <property type="evidence" value="ECO:0007669"/>
    <property type="project" value="UniProtKB-KW"/>
</dbReference>
<dbReference type="GO" id="GO:0006412">
    <property type="term" value="P:translation"/>
    <property type="evidence" value="ECO:0007669"/>
    <property type="project" value="UniProtKB-UniRule"/>
</dbReference>
<dbReference type="CDD" id="cd00403">
    <property type="entry name" value="Ribosomal_L1"/>
    <property type="match status" value="1"/>
</dbReference>
<dbReference type="FunFam" id="3.40.50.790:FF:000001">
    <property type="entry name" value="50S ribosomal protein L1"/>
    <property type="match status" value="1"/>
</dbReference>
<dbReference type="Gene3D" id="3.30.190.20">
    <property type="match status" value="1"/>
</dbReference>
<dbReference type="Gene3D" id="3.40.50.790">
    <property type="match status" value="1"/>
</dbReference>
<dbReference type="HAMAP" id="MF_01318_B">
    <property type="entry name" value="Ribosomal_uL1_B"/>
    <property type="match status" value="1"/>
</dbReference>
<dbReference type="InterPro" id="IPR005878">
    <property type="entry name" value="Ribosom_uL1_bac-type"/>
</dbReference>
<dbReference type="InterPro" id="IPR002143">
    <property type="entry name" value="Ribosomal_uL1"/>
</dbReference>
<dbReference type="InterPro" id="IPR023674">
    <property type="entry name" value="Ribosomal_uL1-like"/>
</dbReference>
<dbReference type="InterPro" id="IPR028364">
    <property type="entry name" value="Ribosomal_uL1/biogenesis"/>
</dbReference>
<dbReference type="InterPro" id="IPR016095">
    <property type="entry name" value="Ribosomal_uL1_3-a/b-sand"/>
</dbReference>
<dbReference type="InterPro" id="IPR023673">
    <property type="entry name" value="Ribosomal_uL1_CS"/>
</dbReference>
<dbReference type="NCBIfam" id="TIGR01169">
    <property type="entry name" value="rplA_bact"/>
    <property type="match status" value="1"/>
</dbReference>
<dbReference type="PANTHER" id="PTHR36427">
    <property type="entry name" value="54S RIBOSOMAL PROTEIN L1, MITOCHONDRIAL"/>
    <property type="match status" value="1"/>
</dbReference>
<dbReference type="PANTHER" id="PTHR36427:SF3">
    <property type="entry name" value="LARGE RIBOSOMAL SUBUNIT PROTEIN UL1M"/>
    <property type="match status" value="1"/>
</dbReference>
<dbReference type="Pfam" id="PF00687">
    <property type="entry name" value="Ribosomal_L1"/>
    <property type="match status" value="1"/>
</dbReference>
<dbReference type="PIRSF" id="PIRSF002155">
    <property type="entry name" value="Ribosomal_L1"/>
    <property type="match status" value="1"/>
</dbReference>
<dbReference type="SUPFAM" id="SSF56808">
    <property type="entry name" value="Ribosomal protein L1"/>
    <property type="match status" value="1"/>
</dbReference>
<dbReference type="PROSITE" id="PS01199">
    <property type="entry name" value="RIBOSOMAL_L1"/>
    <property type="match status" value="1"/>
</dbReference>
<reference key="1">
    <citation type="journal article" date="2008" name="Genome Res.">
        <title>Chlamydia trachomatis: genome sequence analysis of lymphogranuloma venereum isolates.</title>
        <authorList>
            <person name="Thomson N.R."/>
            <person name="Holden M.T.G."/>
            <person name="Carder C."/>
            <person name="Lennard N."/>
            <person name="Lockey S.J."/>
            <person name="Marsh P."/>
            <person name="Skipp P."/>
            <person name="O'Connor C.D."/>
            <person name="Goodhead I."/>
            <person name="Norbertzcak H."/>
            <person name="Harris B."/>
            <person name="Ormond D."/>
            <person name="Rance R."/>
            <person name="Quail M.A."/>
            <person name="Parkhill J."/>
            <person name="Stephens R.S."/>
            <person name="Clarke I.N."/>
        </authorList>
    </citation>
    <scope>NUCLEOTIDE SEQUENCE [LARGE SCALE GENOMIC DNA]</scope>
    <source>
        <strain>UCH-1/proctitis</strain>
    </source>
</reference>
<comment type="function">
    <text evidence="1">Binds directly to 23S rRNA. The L1 stalk is quite mobile in the ribosome, and is involved in E site tRNA release.</text>
</comment>
<comment type="function">
    <text evidence="1">Protein L1 is also a translational repressor protein, it controls the translation of the L11 operon by binding to its mRNA.</text>
</comment>
<comment type="subunit">
    <text evidence="1">Part of the 50S ribosomal subunit.</text>
</comment>
<comment type="similarity">
    <text evidence="1">Belongs to the universal ribosomal protein uL1 family.</text>
</comment>
<feature type="chain" id="PRO_1000141378" description="Large ribosomal subunit protein uL1">
    <location>
        <begin position="1"/>
        <end position="232"/>
    </location>
</feature>
<proteinExistence type="inferred from homology"/>
<organism>
    <name type="scientific">Chlamydia trachomatis serovar L2b (strain UCH-1/proctitis)</name>
    <dbReference type="NCBI Taxonomy" id="471473"/>
    <lineage>
        <taxon>Bacteria</taxon>
        <taxon>Pseudomonadati</taxon>
        <taxon>Chlamydiota</taxon>
        <taxon>Chlamydiia</taxon>
        <taxon>Chlamydiales</taxon>
        <taxon>Chlamydiaceae</taxon>
        <taxon>Chlamydia/Chlamydophila group</taxon>
        <taxon>Chlamydia</taxon>
    </lineage>
</organism>
<evidence type="ECO:0000255" key="1">
    <source>
        <dbReference type="HAMAP-Rule" id="MF_01318"/>
    </source>
</evidence>
<evidence type="ECO:0000305" key="2"/>